<proteinExistence type="evidence at protein level"/>
<name>LENC_ASPLE</name>
<protein>
    <recommendedName>
        <fullName evidence="4">Cytochrome P450 monooxygenase lenC</fullName>
        <ecNumber>1.-.-.-</ecNumber>
    </recommendedName>
    <alternativeName>
        <fullName evidence="4">Lentopeptin biogenesis cluster protein C</fullName>
    </alternativeName>
</protein>
<gene>
    <name evidence="4" type="primary">lenC</name>
    <name type="ORF">ALT_0152</name>
</gene>
<organism>
    <name type="scientific">Aspergillus lentulus</name>
    <dbReference type="NCBI Taxonomy" id="293939"/>
    <lineage>
        <taxon>Eukaryota</taxon>
        <taxon>Fungi</taxon>
        <taxon>Dikarya</taxon>
        <taxon>Ascomycota</taxon>
        <taxon>Pezizomycotina</taxon>
        <taxon>Eurotiomycetes</taxon>
        <taxon>Eurotiomycetidae</taxon>
        <taxon>Eurotiales</taxon>
        <taxon>Aspergillaceae</taxon>
        <taxon>Aspergillus</taxon>
        <taxon>Aspergillus subgen. Fumigati</taxon>
    </lineage>
</organism>
<sequence>MDSAFVLPHPASMGASCILGLLLLTILRALLIPKKALPLAINHHRWDIFNRRAIQDFTANPQDLIKAGLKKVIDPQIAPRFAKGTFLVLPERYSEEVKNDERFSAYEALSRSSPQIILLELPGFESVFEGLMHNDVVLPGVAAMNRQLASLTSPMSEEVSHYLQTNWTDDPDWHTQSVSASMSGLIGQAAARIIVGPELCRNKEYHAITLSYTMSRGRALAAIHAWPRALHPLIHWFLPSCRNVRTQIRRAEKLITPILERTRRHRARGDPPQAFSTLAWSDEYARAQGRSYNATLAQMRFTSSSIHNTSDLLGKVMLRICQRPDLIEPLRREIVAAFDGGSGAQHHSLGKLKLMESVMKETQRLEPAAERVSYPPPLTPERLTGYSIVNMFRVAKETVTLSDGTTIPKGTIFGFSYQNRFDPSMYPDPETFDPYRFMRMRQDPVQASLASFTKARSTHLSFGLGRHACPGRFMANDMIKLALSHILLKYDFKLVGEELPKLEMHGFVYAREPTAQILVRRRQEEVVL</sequence>
<accession>A0AAN4PBA1</accession>
<keyword id="KW-0017">Alkaloid metabolism</keyword>
<keyword id="KW-0349">Heme</keyword>
<keyword id="KW-0408">Iron</keyword>
<keyword id="KW-0472">Membrane</keyword>
<keyword id="KW-0479">Metal-binding</keyword>
<keyword id="KW-0503">Monooxygenase</keyword>
<keyword id="KW-0560">Oxidoreductase</keyword>
<keyword id="KW-0812">Transmembrane</keyword>
<keyword id="KW-1133">Transmembrane helix</keyword>
<feature type="chain" id="PRO_0000462094" description="Cytochrome P450 monooxygenase lenC">
    <location>
        <begin position="1"/>
        <end position="528"/>
    </location>
</feature>
<feature type="transmembrane region" description="Helical" evidence="2">
    <location>
        <begin position="5"/>
        <end position="27"/>
    </location>
</feature>
<feature type="binding site" description="axial binding residue" evidence="1">
    <location>
        <position position="469"/>
    </location>
    <ligand>
        <name>heme</name>
        <dbReference type="ChEBI" id="CHEBI:30413"/>
    </ligand>
    <ligandPart>
        <name>Fe</name>
        <dbReference type="ChEBI" id="CHEBI:18248"/>
    </ligandPart>
</feature>
<reference key="1">
    <citation type="journal article" date="2016" name="Genome Announc.">
        <title>Draft Genome Sequence of the Pathogenic Filamentous Fungus Aspergillus lentulus IFM 54703T.</title>
        <authorList>
            <person name="Kusuya Y."/>
            <person name="Sakai K."/>
            <person name="Kamei K."/>
            <person name="Takahashi H."/>
            <person name="Yaguchi T."/>
        </authorList>
    </citation>
    <scope>NUCLEOTIDE SEQUENCE [LARGE SCALE GENOMIC DNA]</scope>
    <source>
        <strain>IFM 54703</strain>
    </source>
</reference>
<reference key="2">
    <citation type="journal article" date="2022" name="J. Am. Chem. Soc.">
        <title>Alkaloid Biosynthetic Enzyme Generates Diastereomeric Pair via Two Distinct Mechanisms.</title>
        <authorList>
            <person name="Kishimoto S."/>
            <person name="Matsubara Y."/>
            <person name="Watanabe K."/>
        </authorList>
    </citation>
    <scope>FUNCTION</scope>
    <scope>DISRUPTION PHENOTYPE</scope>
    <scope>CATALYTIC ACTIVITY</scope>
    <scope>PATHWAY</scope>
</reference>
<evidence type="ECO:0000250" key="1">
    <source>
        <dbReference type="UniProtKB" id="P04798"/>
    </source>
</evidence>
<evidence type="ECO:0000255" key="2"/>
<evidence type="ECO:0000269" key="3">
    <source>
    </source>
</evidence>
<evidence type="ECO:0000303" key="4">
    <source>
    </source>
</evidence>
<evidence type="ECO:0000305" key="5"/>
<dbReference type="EC" id="1.-.-.-"/>
<dbReference type="EMBL" id="BCLY01000001">
    <property type="protein sequence ID" value="GAQ02831.1"/>
    <property type="molecule type" value="Genomic_DNA"/>
</dbReference>
<dbReference type="Proteomes" id="UP000051487">
    <property type="component" value="Unassembled WGS sequence"/>
</dbReference>
<dbReference type="GO" id="GO:0016020">
    <property type="term" value="C:membrane"/>
    <property type="evidence" value="ECO:0007669"/>
    <property type="project" value="UniProtKB-SubCell"/>
</dbReference>
<dbReference type="GO" id="GO:0020037">
    <property type="term" value="F:heme binding"/>
    <property type="evidence" value="ECO:0007669"/>
    <property type="project" value="InterPro"/>
</dbReference>
<dbReference type="GO" id="GO:0005506">
    <property type="term" value="F:iron ion binding"/>
    <property type="evidence" value="ECO:0007669"/>
    <property type="project" value="InterPro"/>
</dbReference>
<dbReference type="GO" id="GO:0004497">
    <property type="term" value="F:monooxygenase activity"/>
    <property type="evidence" value="ECO:0007669"/>
    <property type="project" value="UniProtKB-KW"/>
</dbReference>
<dbReference type="GO" id="GO:0016705">
    <property type="term" value="F:oxidoreductase activity, acting on paired donors, with incorporation or reduction of molecular oxygen"/>
    <property type="evidence" value="ECO:0007669"/>
    <property type="project" value="InterPro"/>
</dbReference>
<dbReference type="GO" id="GO:0009058">
    <property type="term" value="P:biosynthetic process"/>
    <property type="evidence" value="ECO:0007669"/>
    <property type="project" value="UniProtKB-ARBA"/>
</dbReference>
<dbReference type="GO" id="GO:0019748">
    <property type="term" value="P:secondary metabolic process"/>
    <property type="evidence" value="ECO:0007669"/>
    <property type="project" value="UniProtKB-ARBA"/>
</dbReference>
<dbReference type="CDD" id="cd11041">
    <property type="entry name" value="CYP503A1-like"/>
    <property type="match status" value="1"/>
</dbReference>
<dbReference type="Gene3D" id="1.10.630.10">
    <property type="entry name" value="Cytochrome P450"/>
    <property type="match status" value="1"/>
</dbReference>
<dbReference type="InterPro" id="IPR001128">
    <property type="entry name" value="Cyt_P450"/>
</dbReference>
<dbReference type="InterPro" id="IPR017972">
    <property type="entry name" value="Cyt_P450_CS"/>
</dbReference>
<dbReference type="InterPro" id="IPR002403">
    <property type="entry name" value="Cyt_P450_E_grp-IV"/>
</dbReference>
<dbReference type="InterPro" id="IPR036396">
    <property type="entry name" value="Cyt_P450_sf"/>
</dbReference>
<dbReference type="PANTHER" id="PTHR46206">
    <property type="entry name" value="CYTOCHROME P450"/>
    <property type="match status" value="1"/>
</dbReference>
<dbReference type="PANTHER" id="PTHR46206:SF3">
    <property type="entry name" value="P450, PUTATIVE (EUROFUNG)-RELATED"/>
    <property type="match status" value="1"/>
</dbReference>
<dbReference type="Pfam" id="PF00067">
    <property type="entry name" value="p450"/>
    <property type="match status" value="2"/>
</dbReference>
<dbReference type="PRINTS" id="PR00465">
    <property type="entry name" value="EP450IV"/>
</dbReference>
<dbReference type="SUPFAM" id="SSF48264">
    <property type="entry name" value="Cytochrome P450"/>
    <property type="match status" value="1"/>
</dbReference>
<dbReference type="PROSITE" id="PS00086">
    <property type="entry name" value="CYTOCHROME_P450"/>
    <property type="match status" value="1"/>
</dbReference>
<comment type="function">
    <text evidence="3">Nonribosomal peptide synthetase; part of the gene cluster that mediates the biosynthesis of the ergot alkaloids lentopeptins A and B (PubMed:35302734). Within the pathway, lenC catalyzes the post-NRPS oxidative modification steps using as substrate the N-acyldiketopiperazine intermediate produced by the NRPS lenA. Lentopeptin A forms via a stereospecific hydroxylation, followed by a spontaneous bicyclic lactam core formation, while lentopeptin B is produced through an initial dehydrogenation, followed by a bicyclic lactam core formation and stereospecific hydration (PubMed:35302734). The phenylalanine ammonia-lyase lenB provides the cinnamic acid starter unit to the NRPS lenA for the synthesis of the N-acyldiketopiperazine intermediate which in turn is converted into lentopeptins A and B by lenC (PubMed:35302734).</text>
</comment>
<comment type="cofactor">
    <cofactor evidence="1">
        <name>heme</name>
        <dbReference type="ChEBI" id="CHEBI:30413"/>
    </cofactor>
</comment>
<comment type="pathway">
    <text evidence="3">Alkaloid biosynthesis.</text>
</comment>
<comment type="subcellular location">
    <subcellularLocation>
        <location evidence="2">Membrane</location>
        <topology evidence="2">Single-pass membrane protein</topology>
    </subcellularLocation>
</comment>
<comment type="disruption phenotype">
    <text evidence="3">Prevents the post-NRPS oxidative modification steps to form lentopeptins A and B, and leads to the accumulation of the N-acyldiketopiperazine intermediate produced by lenA.</text>
</comment>
<comment type="similarity">
    <text evidence="5">Belongs to the cytochrome P450 family.</text>
</comment>